<keyword id="KW-0216">Detoxification</keyword>
<keyword id="KW-0378">Hydrolase</keyword>
<feature type="chain" id="PRO_0000216772" description="Haloalkane dehalogenase">
    <location>
        <begin position="1"/>
        <end position="310"/>
    </location>
</feature>
<feature type="domain" description="AB hydrolase-1" evidence="3">
    <location>
        <begin position="49"/>
        <end position="295"/>
    </location>
</feature>
<feature type="active site" description="Nucleophile" evidence="1">
    <location>
        <position position="124"/>
    </location>
</feature>
<feature type="active site" description="Proton donor" evidence="1">
    <location>
        <position position="260"/>
    </location>
</feature>
<feature type="active site" description="Proton acceptor" evidence="1">
    <location>
        <position position="289"/>
    </location>
</feature>
<feature type="binding site" evidence="2">
    <location>
        <position position="125"/>
    </location>
    <ligand>
        <name>chloride</name>
        <dbReference type="ChEBI" id="CHEBI:17996"/>
    </ligand>
</feature>
<feature type="binding site" evidence="2">
    <location>
        <position position="175"/>
    </location>
    <ligand>
        <name>chloride</name>
        <dbReference type="ChEBI" id="CHEBI:17996"/>
    </ligand>
</feature>
<gene>
    <name type="primary">dhlA</name>
</gene>
<sequence>MINAIRTPDQRFSNLDQYPFSPNYLDDLPGYPGLRAHYLDEGNSDAEDVFLCLHGEPTWSYLYRKMIPVFAESGARVIAPDFFGFGKSDKPVDEEDYTFEFHRNFLLALIERLDLRNITLVVQDWGGFLGLTLPMADPSRFKRLIIMNACLMTDPVTQPAFSAFVTQPADGFTAWKYDLVTPSDLRLDQFMKRWAPTLTEAEASAYAAPFPDTSYQAGVRKFPKMVAQRDQACIDISTEAISFWQNDWNGQTFMAIGMKDKLLGPDVMYPMKALINGCPEPLEIADAGHFVQEFGEQVAREALKHFAETE</sequence>
<comment type="function">
    <text evidence="1">Catalyzes hydrolytic cleavage of carbon-halogen bonds in halogenated aliphatic compounds, leading to the formation of the corresponding primary alcohols, halide ions and protons. Has a broad substrate specificity, which includes terminally mono- and di- chlorinated and brominated alkanes (up to C4 only). The highest activity was found with 1,2-dichloroethane, 1,3-dichloropropane, and 1,2-dibromoethane (By similarity).</text>
</comment>
<comment type="catalytic activity">
    <reaction>
        <text>1-haloalkane + H2O = a halide anion + a primary alcohol + H(+)</text>
        <dbReference type="Rhea" id="RHEA:19081"/>
        <dbReference type="ChEBI" id="CHEBI:15377"/>
        <dbReference type="ChEBI" id="CHEBI:15378"/>
        <dbReference type="ChEBI" id="CHEBI:15734"/>
        <dbReference type="ChEBI" id="CHEBI:16042"/>
        <dbReference type="ChEBI" id="CHEBI:18060"/>
        <dbReference type="EC" id="3.8.1.5"/>
    </reaction>
</comment>
<comment type="catalytic activity">
    <reaction>
        <text>1,2-dichloroethane + H2O = 2-chloroethanol + chloride + H(+)</text>
        <dbReference type="Rhea" id="RHEA:25185"/>
        <dbReference type="ChEBI" id="CHEBI:15377"/>
        <dbReference type="ChEBI" id="CHEBI:15378"/>
        <dbReference type="ChEBI" id="CHEBI:17996"/>
        <dbReference type="ChEBI" id="CHEBI:27789"/>
        <dbReference type="ChEBI" id="CHEBI:28200"/>
        <dbReference type="EC" id="3.8.1.5"/>
    </reaction>
</comment>
<comment type="activity regulation">
    <text evidence="1">Inhibited by thiol reagents such as p-chloromercuribenzoate and iodoacetamide.</text>
</comment>
<comment type="pathway">
    <text>Xenobiotic degradation; 1,2-dichloroethane degradation; glycolate from 1,2-dichloroethane: step 1/4.</text>
</comment>
<comment type="subunit">
    <text evidence="1">Monomer.</text>
</comment>
<comment type="similarity">
    <text evidence="4">Belongs to the haloalkane dehalogenase family. Type 1 subfamily.</text>
</comment>
<name>DHLA_XANFL</name>
<reference key="1">
    <citation type="submission" date="2004-02" db="EMBL/GenBank/DDBJ databases">
        <title>X. flavus UE-15 dhlA gene and insertion element.</title>
        <authorList>
            <person name="Song J.-S."/>
            <person name="Kim C.-K."/>
        </authorList>
    </citation>
    <scope>NUCLEOTIDE SEQUENCE [GENOMIC DNA]</scope>
    <source>
        <strain>UE-15</strain>
    </source>
</reference>
<dbReference type="EC" id="3.8.1.5"/>
<dbReference type="EMBL" id="AY561847">
    <property type="protein sequence ID" value="AAS83192.1"/>
    <property type="molecule type" value="Genomic_DNA"/>
</dbReference>
<dbReference type="SMR" id="Q6Q3H0"/>
<dbReference type="ESTHER" id="xanau-halo1">
    <property type="family name" value="Haloalkane_dehalogenase-HLD1"/>
</dbReference>
<dbReference type="UniPathway" id="UPA00265">
    <property type="reaction ID" value="UER00387"/>
</dbReference>
<dbReference type="GO" id="GO:0004301">
    <property type="term" value="F:epoxide hydrolase activity"/>
    <property type="evidence" value="ECO:0007669"/>
    <property type="project" value="TreeGrafter"/>
</dbReference>
<dbReference type="GO" id="GO:0018786">
    <property type="term" value="F:haloalkane dehalogenase activity"/>
    <property type="evidence" value="ECO:0007669"/>
    <property type="project" value="UniProtKB-UniRule"/>
</dbReference>
<dbReference type="GO" id="GO:0019260">
    <property type="term" value="P:1,2-dichloroethane catabolic process"/>
    <property type="evidence" value="ECO:0007669"/>
    <property type="project" value="UniProtKB-UniPathway"/>
</dbReference>
<dbReference type="GO" id="GO:0009636">
    <property type="term" value="P:response to toxic substance"/>
    <property type="evidence" value="ECO:0007669"/>
    <property type="project" value="UniProtKB-KW"/>
</dbReference>
<dbReference type="Gene3D" id="3.40.50.1820">
    <property type="entry name" value="alpha/beta hydrolase"/>
    <property type="match status" value="1"/>
</dbReference>
<dbReference type="HAMAP" id="MF_01230">
    <property type="entry name" value="Haloalk_dehal_type1"/>
    <property type="match status" value="1"/>
</dbReference>
<dbReference type="InterPro" id="IPR000073">
    <property type="entry name" value="AB_hydrolase_1"/>
</dbReference>
<dbReference type="InterPro" id="IPR029058">
    <property type="entry name" value="AB_hydrolase_fold"/>
</dbReference>
<dbReference type="InterPro" id="IPR000639">
    <property type="entry name" value="Epox_hydrolase-like"/>
</dbReference>
<dbReference type="InterPro" id="IPR051340">
    <property type="entry name" value="Haloalkane_dehalogenase"/>
</dbReference>
<dbReference type="InterPro" id="IPR023489">
    <property type="entry name" value="Haloalkane_dehalogenase_1"/>
</dbReference>
<dbReference type="NCBIfam" id="NF002043">
    <property type="entry name" value="PRK00870.1"/>
    <property type="match status" value="1"/>
</dbReference>
<dbReference type="PANTHER" id="PTHR42977:SF3">
    <property type="entry name" value="AB HYDROLASE-1 DOMAIN-CONTAINING PROTEIN"/>
    <property type="match status" value="1"/>
</dbReference>
<dbReference type="PANTHER" id="PTHR42977">
    <property type="entry name" value="HYDROLASE-RELATED"/>
    <property type="match status" value="1"/>
</dbReference>
<dbReference type="Pfam" id="PF00561">
    <property type="entry name" value="Abhydrolase_1"/>
    <property type="match status" value="1"/>
</dbReference>
<dbReference type="PRINTS" id="PR00111">
    <property type="entry name" value="ABHYDROLASE"/>
</dbReference>
<dbReference type="PRINTS" id="PR00412">
    <property type="entry name" value="EPOXHYDRLASE"/>
</dbReference>
<dbReference type="SUPFAM" id="SSF53474">
    <property type="entry name" value="alpha/beta-Hydrolases"/>
    <property type="match status" value="1"/>
</dbReference>
<protein>
    <recommendedName>
        <fullName>Haloalkane dehalogenase</fullName>
        <ecNumber>3.8.1.5</ecNumber>
    </recommendedName>
</protein>
<proteinExistence type="inferred from homology"/>
<accession>Q6Q3H0</accession>
<evidence type="ECO:0000250" key="1"/>
<evidence type="ECO:0000250" key="2">
    <source>
        <dbReference type="UniProtKB" id="P22643"/>
    </source>
</evidence>
<evidence type="ECO:0000255" key="3"/>
<evidence type="ECO:0000305" key="4"/>
<organism>
    <name type="scientific">Xanthobacter flavus</name>
    <dbReference type="NCBI Taxonomy" id="281"/>
    <lineage>
        <taxon>Bacteria</taxon>
        <taxon>Pseudomonadati</taxon>
        <taxon>Pseudomonadota</taxon>
        <taxon>Alphaproteobacteria</taxon>
        <taxon>Hyphomicrobiales</taxon>
        <taxon>Xanthobacteraceae</taxon>
        <taxon>Xanthobacter</taxon>
    </lineage>
</organism>